<comment type="function">
    <text evidence="1">Bidirectionally degrades single-stranded DNA into large acid-insoluble oligonucleotides, which are then degraded further into small acid-soluble oligonucleotides.</text>
</comment>
<comment type="catalytic activity">
    <reaction evidence="1">
        <text>Exonucleolytic cleavage in either 5'- to 3'- or 3'- to 5'-direction to yield nucleoside 5'-phosphates.</text>
        <dbReference type="EC" id="3.1.11.6"/>
    </reaction>
</comment>
<comment type="subunit">
    <text evidence="1">Heterooligomer composed of large and small subunits.</text>
</comment>
<comment type="subcellular location">
    <subcellularLocation>
        <location evidence="1">Cytoplasm</location>
    </subcellularLocation>
</comment>
<comment type="similarity">
    <text evidence="1">Belongs to the XseA family.</text>
</comment>
<name>EX7L_SINMW</name>
<sequence length="526" mass="56764">MTSFFDSESPSNVAEYSVSELSGSIKRTIEQTFEHVRVRGEISGYRGPHSSGHAYFTLKDDRARIDAVVWKGTFARLKFRPEEGMEVIATGRVTTFPGSSKYQVVIDALEPAGAGALMALIEERKRKLAAEGLFDAGRKRPLPFMPKVIGVVTSPTGAVIRDILHRIADRFPVHVLVWPVRVQGDGACEEIVAAIEGFNALQPGGPIARPDVLIVARGGGSLEDLWCFNDEAMVRAAAGSAIPLISAVGHETDWTLIDHAADQRAPTPTGAAEMAVPVKADLEAQLASLSARLKGAAVRQMDNRRQTLRSLARALPSLDQLLALPRRRFDEAAAGLGRGLQMNTANKRRSFERSAAHLRPDLLTARIVDRRQRVVDAVNRAERIVERQVHRGAARVASADASLRALPSRLIGQVHRASDRVSAMSRRADAAIAADLRRLKSAVAAQDRVLQSLSYRNVLQRGFALVRDAAGEPVKQAAAVHSGMALSVEFADGRVAAVAGEDGTPSQAPKKRPARAGEPTKQGSLF</sequence>
<protein>
    <recommendedName>
        <fullName evidence="1">Exodeoxyribonuclease 7 large subunit</fullName>
        <ecNumber evidence="1">3.1.11.6</ecNumber>
    </recommendedName>
    <alternativeName>
        <fullName evidence="1">Exodeoxyribonuclease VII large subunit</fullName>
        <shortName evidence="1">Exonuclease VII large subunit</shortName>
    </alternativeName>
</protein>
<evidence type="ECO:0000255" key="1">
    <source>
        <dbReference type="HAMAP-Rule" id="MF_00378"/>
    </source>
</evidence>
<evidence type="ECO:0000256" key="2">
    <source>
        <dbReference type="SAM" id="MobiDB-lite"/>
    </source>
</evidence>
<gene>
    <name evidence="1" type="primary">xseA</name>
    <name type="ordered locus">Smed_3498</name>
</gene>
<dbReference type="EC" id="3.1.11.6" evidence="1"/>
<dbReference type="EMBL" id="CP000738">
    <property type="protein sequence ID" value="ABR62316.1"/>
    <property type="molecule type" value="Genomic_DNA"/>
</dbReference>
<dbReference type="RefSeq" id="WP_012067695.1">
    <property type="nucleotide sequence ID" value="NC_009636.1"/>
</dbReference>
<dbReference type="RefSeq" id="YP_001329151.1">
    <property type="nucleotide sequence ID" value="NC_009636.1"/>
</dbReference>
<dbReference type="SMR" id="A6UF86"/>
<dbReference type="STRING" id="366394.Smed_3498"/>
<dbReference type="GeneID" id="61611051"/>
<dbReference type="KEGG" id="smd:Smed_3498"/>
<dbReference type="PATRIC" id="fig|366394.8.peg.6749"/>
<dbReference type="eggNOG" id="COG1570">
    <property type="taxonomic scope" value="Bacteria"/>
</dbReference>
<dbReference type="HOGENOM" id="CLU_023625_3_1_5"/>
<dbReference type="OrthoDB" id="9802795at2"/>
<dbReference type="Proteomes" id="UP000001108">
    <property type="component" value="Chromosome"/>
</dbReference>
<dbReference type="GO" id="GO:0005737">
    <property type="term" value="C:cytoplasm"/>
    <property type="evidence" value="ECO:0007669"/>
    <property type="project" value="UniProtKB-SubCell"/>
</dbReference>
<dbReference type="GO" id="GO:0009318">
    <property type="term" value="C:exodeoxyribonuclease VII complex"/>
    <property type="evidence" value="ECO:0007669"/>
    <property type="project" value="InterPro"/>
</dbReference>
<dbReference type="GO" id="GO:0008855">
    <property type="term" value="F:exodeoxyribonuclease VII activity"/>
    <property type="evidence" value="ECO:0007669"/>
    <property type="project" value="UniProtKB-UniRule"/>
</dbReference>
<dbReference type="GO" id="GO:0003676">
    <property type="term" value="F:nucleic acid binding"/>
    <property type="evidence" value="ECO:0007669"/>
    <property type="project" value="InterPro"/>
</dbReference>
<dbReference type="GO" id="GO:0006308">
    <property type="term" value="P:DNA catabolic process"/>
    <property type="evidence" value="ECO:0007669"/>
    <property type="project" value="UniProtKB-UniRule"/>
</dbReference>
<dbReference type="CDD" id="cd04489">
    <property type="entry name" value="ExoVII_LU_OBF"/>
    <property type="match status" value="1"/>
</dbReference>
<dbReference type="HAMAP" id="MF_00378">
    <property type="entry name" value="Exonuc_7_L"/>
    <property type="match status" value="1"/>
</dbReference>
<dbReference type="InterPro" id="IPR003753">
    <property type="entry name" value="Exonuc_VII_L"/>
</dbReference>
<dbReference type="InterPro" id="IPR020579">
    <property type="entry name" value="Exonuc_VII_lsu_C"/>
</dbReference>
<dbReference type="InterPro" id="IPR025824">
    <property type="entry name" value="OB-fold_nuc-bd_dom"/>
</dbReference>
<dbReference type="NCBIfam" id="TIGR00237">
    <property type="entry name" value="xseA"/>
    <property type="match status" value="1"/>
</dbReference>
<dbReference type="PANTHER" id="PTHR30008">
    <property type="entry name" value="EXODEOXYRIBONUCLEASE 7 LARGE SUBUNIT"/>
    <property type="match status" value="1"/>
</dbReference>
<dbReference type="PANTHER" id="PTHR30008:SF0">
    <property type="entry name" value="EXODEOXYRIBONUCLEASE 7 LARGE SUBUNIT"/>
    <property type="match status" value="1"/>
</dbReference>
<dbReference type="Pfam" id="PF02601">
    <property type="entry name" value="Exonuc_VII_L"/>
    <property type="match status" value="2"/>
</dbReference>
<dbReference type="Pfam" id="PF13742">
    <property type="entry name" value="tRNA_anti_2"/>
    <property type="match status" value="1"/>
</dbReference>
<accession>A6UF86</accession>
<organism>
    <name type="scientific">Sinorhizobium medicae (strain WSM419)</name>
    <name type="common">Ensifer medicae</name>
    <dbReference type="NCBI Taxonomy" id="366394"/>
    <lineage>
        <taxon>Bacteria</taxon>
        <taxon>Pseudomonadati</taxon>
        <taxon>Pseudomonadota</taxon>
        <taxon>Alphaproteobacteria</taxon>
        <taxon>Hyphomicrobiales</taxon>
        <taxon>Rhizobiaceae</taxon>
        <taxon>Sinorhizobium/Ensifer group</taxon>
        <taxon>Sinorhizobium</taxon>
    </lineage>
</organism>
<feature type="chain" id="PRO_1000048786" description="Exodeoxyribonuclease 7 large subunit">
    <location>
        <begin position="1"/>
        <end position="526"/>
    </location>
</feature>
<feature type="region of interest" description="Disordered" evidence="2">
    <location>
        <begin position="499"/>
        <end position="526"/>
    </location>
</feature>
<keyword id="KW-0963">Cytoplasm</keyword>
<keyword id="KW-0269">Exonuclease</keyword>
<keyword id="KW-0378">Hydrolase</keyword>
<keyword id="KW-0540">Nuclease</keyword>
<proteinExistence type="inferred from homology"/>
<reference key="1">
    <citation type="submission" date="2007-06" db="EMBL/GenBank/DDBJ databases">
        <title>Complete sequence of Sinorhizobium medicae WSM419 chromosome.</title>
        <authorList>
            <consortium name="US DOE Joint Genome Institute"/>
            <person name="Copeland A."/>
            <person name="Lucas S."/>
            <person name="Lapidus A."/>
            <person name="Barry K."/>
            <person name="Glavina del Rio T."/>
            <person name="Dalin E."/>
            <person name="Tice H."/>
            <person name="Pitluck S."/>
            <person name="Chain P."/>
            <person name="Malfatti S."/>
            <person name="Shin M."/>
            <person name="Vergez L."/>
            <person name="Schmutz J."/>
            <person name="Larimer F."/>
            <person name="Land M."/>
            <person name="Hauser L."/>
            <person name="Kyrpides N."/>
            <person name="Mikhailova N."/>
            <person name="Reeve W.G."/>
            <person name="Richardson P."/>
        </authorList>
    </citation>
    <scope>NUCLEOTIDE SEQUENCE [LARGE SCALE GENOMIC DNA]</scope>
    <source>
        <strain>WSM419</strain>
    </source>
</reference>